<name>CYB5_DROME</name>
<proteinExistence type="evidence at transcript level"/>
<organism>
    <name type="scientific">Drosophila melanogaster</name>
    <name type="common">Fruit fly</name>
    <dbReference type="NCBI Taxonomy" id="7227"/>
    <lineage>
        <taxon>Eukaryota</taxon>
        <taxon>Metazoa</taxon>
        <taxon>Ecdysozoa</taxon>
        <taxon>Arthropoda</taxon>
        <taxon>Hexapoda</taxon>
        <taxon>Insecta</taxon>
        <taxon>Pterygota</taxon>
        <taxon>Neoptera</taxon>
        <taxon>Endopterygota</taxon>
        <taxon>Diptera</taxon>
        <taxon>Brachycera</taxon>
        <taxon>Muscomorpha</taxon>
        <taxon>Ephydroidea</taxon>
        <taxon>Drosophilidae</taxon>
        <taxon>Drosophila</taxon>
        <taxon>Sophophora</taxon>
    </lineage>
</organism>
<gene>
    <name type="primary">Cyt-b5</name>
    <name type="ORF">CG2140</name>
</gene>
<protein>
    <recommendedName>
        <fullName>Cytochrome b5</fullName>
        <shortName>CYTB5</shortName>
    </recommendedName>
</protein>
<keyword id="KW-0025">Alternative splicing</keyword>
<keyword id="KW-0249">Electron transport</keyword>
<keyword id="KW-0256">Endoplasmic reticulum</keyword>
<keyword id="KW-0349">Heme</keyword>
<keyword id="KW-0408">Iron</keyword>
<keyword id="KW-0472">Membrane</keyword>
<keyword id="KW-0479">Metal-binding</keyword>
<keyword id="KW-0492">Microsome</keyword>
<keyword id="KW-1185">Reference proteome</keyword>
<keyword id="KW-0812">Transmembrane</keyword>
<keyword id="KW-1133">Transmembrane helix</keyword>
<keyword id="KW-0813">Transport</keyword>
<comment type="function">
    <text evidence="1">Cytochrome b5 is a membrane-bound hemoprotein which functions as an electron carrier for several membrane-bound oxygenases.</text>
</comment>
<comment type="subcellular location">
    <subcellularLocation>
        <location evidence="1">Endoplasmic reticulum membrane</location>
        <topology evidence="1">Single-pass membrane protein</topology>
        <orientation evidence="1">Cytoplasmic side</orientation>
    </subcellularLocation>
    <subcellularLocation>
        <location evidence="1">Microsome membrane</location>
        <topology evidence="1">Single-pass membrane protein</topology>
        <orientation evidence="1">Cytoplasmic side</orientation>
    </subcellularLocation>
</comment>
<comment type="alternative products">
    <event type="alternative splicing"/>
    <isoform>
        <id>Q9V4N3-1</id>
        <name>B</name>
        <sequence type="displayed"/>
    </isoform>
    <isoform>
        <id>Q9V4N3-2</id>
        <name>A</name>
        <sequence type="described" ref="VSP_008871"/>
    </isoform>
</comment>
<comment type="similarity">
    <text evidence="6">Belongs to the cytochrome b5 family.</text>
</comment>
<reference key="1">
    <citation type="journal article" date="2000" name="Science">
        <title>The genome sequence of Drosophila melanogaster.</title>
        <authorList>
            <person name="Adams M.D."/>
            <person name="Celniker S.E."/>
            <person name="Holt R.A."/>
            <person name="Evans C.A."/>
            <person name="Gocayne J.D."/>
            <person name="Amanatides P.G."/>
            <person name="Scherer S.E."/>
            <person name="Li P.W."/>
            <person name="Hoskins R.A."/>
            <person name="Galle R.F."/>
            <person name="George R.A."/>
            <person name="Lewis S.E."/>
            <person name="Richards S."/>
            <person name="Ashburner M."/>
            <person name="Henderson S.N."/>
            <person name="Sutton G.G."/>
            <person name="Wortman J.R."/>
            <person name="Yandell M.D."/>
            <person name="Zhang Q."/>
            <person name="Chen L.X."/>
            <person name="Brandon R.C."/>
            <person name="Rogers Y.-H.C."/>
            <person name="Blazej R.G."/>
            <person name="Champe M."/>
            <person name="Pfeiffer B.D."/>
            <person name="Wan K.H."/>
            <person name="Doyle C."/>
            <person name="Baxter E.G."/>
            <person name="Helt G."/>
            <person name="Nelson C.R."/>
            <person name="Miklos G.L.G."/>
            <person name="Abril J.F."/>
            <person name="Agbayani A."/>
            <person name="An H.-J."/>
            <person name="Andrews-Pfannkoch C."/>
            <person name="Baldwin D."/>
            <person name="Ballew R.M."/>
            <person name="Basu A."/>
            <person name="Baxendale J."/>
            <person name="Bayraktaroglu L."/>
            <person name="Beasley E.M."/>
            <person name="Beeson K.Y."/>
            <person name="Benos P.V."/>
            <person name="Berman B.P."/>
            <person name="Bhandari D."/>
            <person name="Bolshakov S."/>
            <person name="Borkova D."/>
            <person name="Botchan M.R."/>
            <person name="Bouck J."/>
            <person name="Brokstein P."/>
            <person name="Brottier P."/>
            <person name="Burtis K.C."/>
            <person name="Busam D.A."/>
            <person name="Butler H."/>
            <person name="Cadieu E."/>
            <person name="Center A."/>
            <person name="Chandra I."/>
            <person name="Cherry J.M."/>
            <person name="Cawley S."/>
            <person name="Dahlke C."/>
            <person name="Davenport L.B."/>
            <person name="Davies P."/>
            <person name="de Pablos B."/>
            <person name="Delcher A."/>
            <person name="Deng Z."/>
            <person name="Mays A.D."/>
            <person name="Dew I."/>
            <person name="Dietz S.M."/>
            <person name="Dodson K."/>
            <person name="Doup L.E."/>
            <person name="Downes M."/>
            <person name="Dugan-Rocha S."/>
            <person name="Dunkov B.C."/>
            <person name="Dunn P."/>
            <person name="Durbin K.J."/>
            <person name="Evangelista C.C."/>
            <person name="Ferraz C."/>
            <person name="Ferriera S."/>
            <person name="Fleischmann W."/>
            <person name="Fosler C."/>
            <person name="Gabrielian A.E."/>
            <person name="Garg N.S."/>
            <person name="Gelbart W.M."/>
            <person name="Glasser K."/>
            <person name="Glodek A."/>
            <person name="Gong F."/>
            <person name="Gorrell J.H."/>
            <person name="Gu Z."/>
            <person name="Guan P."/>
            <person name="Harris M."/>
            <person name="Harris N.L."/>
            <person name="Harvey D.A."/>
            <person name="Heiman T.J."/>
            <person name="Hernandez J.R."/>
            <person name="Houck J."/>
            <person name="Hostin D."/>
            <person name="Houston K.A."/>
            <person name="Howland T.J."/>
            <person name="Wei M.-H."/>
            <person name="Ibegwam C."/>
            <person name="Jalali M."/>
            <person name="Kalush F."/>
            <person name="Karpen G.H."/>
            <person name="Ke Z."/>
            <person name="Kennison J.A."/>
            <person name="Ketchum K.A."/>
            <person name="Kimmel B.E."/>
            <person name="Kodira C.D."/>
            <person name="Kraft C.L."/>
            <person name="Kravitz S."/>
            <person name="Kulp D."/>
            <person name="Lai Z."/>
            <person name="Lasko P."/>
            <person name="Lei Y."/>
            <person name="Levitsky A.A."/>
            <person name="Li J.H."/>
            <person name="Li Z."/>
            <person name="Liang Y."/>
            <person name="Lin X."/>
            <person name="Liu X."/>
            <person name="Mattei B."/>
            <person name="McIntosh T.C."/>
            <person name="McLeod M.P."/>
            <person name="McPherson D."/>
            <person name="Merkulov G."/>
            <person name="Milshina N.V."/>
            <person name="Mobarry C."/>
            <person name="Morris J."/>
            <person name="Moshrefi A."/>
            <person name="Mount S.M."/>
            <person name="Moy M."/>
            <person name="Murphy B."/>
            <person name="Murphy L."/>
            <person name="Muzny D.M."/>
            <person name="Nelson D.L."/>
            <person name="Nelson D.R."/>
            <person name="Nelson K.A."/>
            <person name="Nixon K."/>
            <person name="Nusskern D.R."/>
            <person name="Pacleb J.M."/>
            <person name="Palazzolo M."/>
            <person name="Pittman G.S."/>
            <person name="Pan S."/>
            <person name="Pollard J."/>
            <person name="Puri V."/>
            <person name="Reese M.G."/>
            <person name="Reinert K."/>
            <person name="Remington K."/>
            <person name="Saunders R.D.C."/>
            <person name="Scheeler F."/>
            <person name="Shen H."/>
            <person name="Shue B.C."/>
            <person name="Siden-Kiamos I."/>
            <person name="Simpson M."/>
            <person name="Skupski M.P."/>
            <person name="Smith T.J."/>
            <person name="Spier E."/>
            <person name="Spradling A.C."/>
            <person name="Stapleton M."/>
            <person name="Strong R."/>
            <person name="Sun E."/>
            <person name="Svirskas R."/>
            <person name="Tector C."/>
            <person name="Turner R."/>
            <person name="Venter E."/>
            <person name="Wang A.H."/>
            <person name="Wang X."/>
            <person name="Wang Z.-Y."/>
            <person name="Wassarman D.A."/>
            <person name="Weinstock G.M."/>
            <person name="Weissenbach J."/>
            <person name="Williams S.M."/>
            <person name="Woodage T."/>
            <person name="Worley K.C."/>
            <person name="Wu D."/>
            <person name="Yang S."/>
            <person name="Yao Q.A."/>
            <person name="Ye J."/>
            <person name="Yeh R.-F."/>
            <person name="Zaveri J.S."/>
            <person name="Zhan M."/>
            <person name="Zhang G."/>
            <person name="Zhao Q."/>
            <person name="Zheng L."/>
            <person name="Zheng X.H."/>
            <person name="Zhong F.N."/>
            <person name="Zhong W."/>
            <person name="Zhou X."/>
            <person name="Zhu S.C."/>
            <person name="Zhu X."/>
            <person name="Smith H.O."/>
            <person name="Gibbs R.A."/>
            <person name="Myers E.W."/>
            <person name="Rubin G.M."/>
            <person name="Venter J.C."/>
        </authorList>
    </citation>
    <scope>NUCLEOTIDE SEQUENCE [LARGE SCALE GENOMIC DNA]</scope>
    <source>
        <strain>Berkeley</strain>
    </source>
</reference>
<reference key="2">
    <citation type="journal article" date="2002" name="Genome Biol.">
        <title>Annotation of the Drosophila melanogaster euchromatic genome: a systematic review.</title>
        <authorList>
            <person name="Misra S."/>
            <person name="Crosby M.A."/>
            <person name="Mungall C.J."/>
            <person name="Matthews B.B."/>
            <person name="Campbell K.S."/>
            <person name="Hradecky P."/>
            <person name="Huang Y."/>
            <person name="Kaminker J.S."/>
            <person name="Millburn G.H."/>
            <person name="Prochnik S.E."/>
            <person name="Smith C.D."/>
            <person name="Tupy J.L."/>
            <person name="Whitfield E.J."/>
            <person name="Bayraktaroglu L."/>
            <person name="Berman B.P."/>
            <person name="Bettencourt B.R."/>
            <person name="Celniker S.E."/>
            <person name="de Grey A.D.N.J."/>
            <person name="Drysdale R.A."/>
            <person name="Harris N.L."/>
            <person name="Richter J."/>
            <person name="Russo S."/>
            <person name="Schroeder A.J."/>
            <person name="Shu S.Q."/>
            <person name="Stapleton M."/>
            <person name="Yamada C."/>
            <person name="Ashburner M."/>
            <person name="Gelbart W.M."/>
            <person name="Rubin G.M."/>
            <person name="Lewis S.E."/>
        </authorList>
    </citation>
    <scope>GENOME REANNOTATION</scope>
    <scope>ALTERNATIVE SPLICING</scope>
    <source>
        <strain>Berkeley</strain>
    </source>
</reference>
<reference key="3">
    <citation type="journal article" date="2002" name="Genome Biol.">
        <title>A Drosophila full-length cDNA resource.</title>
        <authorList>
            <person name="Stapleton M."/>
            <person name="Carlson J.W."/>
            <person name="Brokstein P."/>
            <person name="Yu C."/>
            <person name="Champe M."/>
            <person name="George R.A."/>
            <person name="Guarin H."/>
            <person name="Kronmiller B."/>
            <person name="Pacleb J.M."/>
            <person name="Park S."/>
            <person name="Wan K.H."/>
            <person name="Rubin G.M."/>
            <person name="Celniker S.E."/>
        </authorList>
    </citation>
    <scope>NUCLEOTIDE SEQUENCE [LARGE SCALE MRNA] (ISOFORM A)</scope>
    <source>
        <strain>Berkeley</strain>
        <tissue>Head</tissue>
    </source>
</reference>
<reference key="4">
    <citation type="submission" date="2004-08" db="EMBL/GenBank/DDBJ databases">
        <authorList>
            <person name="Stapleton M."/>
            <person name="Brokstein P."/>
            <person name="Hong L."/>
            <person name="Agbayani A."/>
            <person name="Carlson J.W."/>
            <person name="Champe M."/>
            <person name="Chavez C."/>
            <person name="Dorsett V."/>
            <person name="Dresnek D."/>
            <person name="Farfan D."/>
            <person name="Frise E."/>
            <person name="George R.A."/>
            <person name="Gonzalez M."/>
            <person name="Guarin H."/>
            <person name="Kronmiller B."/>
            <person name="Li P.W."/>
            <person name="Liao G."/>
            <person name="Miranda A."/>
            <person name="Mungall C.J."/>
            <person name="Nunoo J."/>
            <person name="Pacleb J.M."/>
            <person name="Paragas V."/>
            <person name="Park S."/>
            <person name="Patel S."/>
            <person name="Phouanenavong S."/>
            <person name="Wan K.H."/>
            <person name="Yu C."/>
            <person name="Lewis S.E."/>
            <person name="Rubin G.M."/>
            <person name="Celniker S.E."/>
        </authorList>
    </citation>
    <scope>NUCLEOTIDE SEQUENCE [LARGE SCALE MRNA] (ISOFORM B)</scope>
    <source>
        <strain>Berkeley</strain>
        <tissue>Embryo</tissue>
    </source>
</reference>
<dbReference type="EMBL" id="AE013599">
    <property type="protein sequence ID" value="AAF59233.3"/>
    <property type="molecule type" value="Genomic_DNA"/>
</dbReference>
<dbReference type="EMBL" id="AE013599">
    <property type="protein sequence ID" value="AAG22305.2"/>
    <property type="molecule type" value="Genomic_DNA"/>
</dbReference>
<dbReference type="EMBL" id="BT001378">
    <property type="protein sequence ID" value="AAN71133.1"/>
    <property type="molecule type" value="mRNA"/>
</dbReference>
<dbReference type="EMBL" id="BT004852">
    <property type="protein sequence ID" value="AAO45208.1"/>
    <property type="molecule type" value="mRNA"/>
</dbReference>
<dbReference type="EMBL" id="BT015196">
    <property type="protein sequence ID" value="AAT94425.1"/>
    <property type="molecule type" value="mRNA"/>
</dbReference>
<dbReference type="RefSeq" id="NP_610294.1">
    <molecule id="Q9V4N3-1"/>
    <property type="nucleotide sequence ID" value="NM_136450.4"/>
</dbReference>
<dbReference type="RefSeq" id="NP_724575.1">
    <molecule id="Q9V4N3-2"/>
    <property type="nucleotide sequence ID" value="NM_165540.3"/>
</dbReference>
<dbReference type="SMR" id="Q9V4N3"/>
<dbReference type="BioGRID" id="61564">
    <property type="interactions" value="10"/>
</dbReference>
<dbReference type="DIP" id="DIP-22488N"/>
<dbReference type="FunCoup" id="Q9V4N3">
    <property type="interactions" value="1779"/>
</dbReference>
<dbReference type="IntAct" id="Q9V4N3">
    <property type="interactions" value="24"/>
</dbReference>
<dbReference type="STRING" id="7227.FBpp0087979"/>
<dbReference type="PaxDb" id="7227-FBpp0087979"/>
<dbReference type="DNASU" id="35688"/>
<dbReference type="EnsemblMetazoa" id="FBtr0088905">
    <molecule id="Q9V4N3-1"/>
    <property type="protein sequence ID" value="FBpp0087979"/>
    <property type="gene ID" value="FBgn0264294"/>
</dbReference>
<dbReference type="EnsemblMetazoa" id="FBtr0088906">
    <molecule id="Q9V4N3-2"/>
    <property type="protein sequence ID" value="FBpp0087980"/>
    <property type="gene ID" value="FBgn0264294"/>
</dbReference>
<dbReference type="GeneID" id="35688"/>
<dbReference type="KEGG" id="dme:Dmel_CG2140"/>
<dbReference type="UCSC" id="CG2140-RA">
    <molecule id="Q9V4N3-1"/>
    <property type="organism name" value="d. melanogaster"/>
</dbReference>
<dbReference type="AGR" id="FB:FBgn0264294"/>
<dbReference type="CTD" id="35688"/>
<dbReference type="FlyBase" id="FBgn0264294">
    <property type="gene designation" value="Cyt-b5"/>
</dbReference>
<dbReference type="VEuPathDB" id="VectorBase:FBgn0264294"/>
<dbReference type="eggNOG" id="KOG0537">
    <property type="taxonomic scope" value="Eukaryota"/>
</dbReference>
<dbReference type="GeneTree" id="ENSGT00940000155584"/>
<dbReference type="HOGENOM" id="CLU_102602_3_3_1"/>
<dbReference type="InParanoid" id="Q9V4N3"/>
<dbReference type="OMA" id="FMFEHKS"/>
<dbReference type="OrthoDB" id="260519at2759"/>
<dbReference type="PhylomeDB" id="Q9V4N3"/>
<dbReference type="Reactome" id="R-DME-1660661">
    <property type="pathway name" value="Sphingolipid de novo biosynthesis"/>
</dbReference>
<dbReference type="Reactome" id="R-DME-196836">
    <property type="pathway name" value="Vitamin C (ascorbate) metabolism"/>
</dbReference>
<dbReference type="Reactome" id="R-DME-211945">
    <property type="pathway name" value="Phase I - Functionalization of compounds"/>
</dbReference>
<dbReference type="Reactome" id="R-DME-9609523">
    <property type="pathway name" value="Insertion of tail-anchored proteins into the endoplasmic reticulum membrane"/>
</dbReference>
<dbReference type="BioGRID-ORCS" id="35688">
    <property type="hits" value="0 hits in 3 CRISPR screens"/>
</dbReference>
<dbReference type="ChiTaRS" id="Cyt-b5-r">
    <property type="organism name" value="fly"/>
</dbReference>
<dbReference type="GenomeRNAi" id="35688"/>
<dbReference type="PRO" id="PR:Q9V4N3"/>
<dbReference type="Proteomes" id="UP000000803">
    <property type="component" value="Chromosome 2R"/>
</dbReference>
<dbReference type="Bgee" id="FBgn0264294">
    <property type="expression patterns" value="Expressed in adult oenocyte (Drosophila) in adult thorax and 299 other cell types or tissues"/>
</dbReference>
<dbReference type="ExpressionAtlas" id="Q9V4N3">
    <property type="expression patterns" value="baseline and differential"/>
</dbReference>
<dbReference type="GO" id="GO:0012505">
    <property type="term" value="C:endomembrane system"/>
    <property type="evidence" value="ECO:0007005"/>
    <property type="project" value="FlyBase"/>
</dbReference>
<dbReference type="GO" id="GO:0005789">
    <property type="term" value="C:endoplasmic reticulum membrane"/>
    <property type="evidence" value="ECO:0007669"/>
    <property type="project" value="UniProtKB-SubCell"/>
</dbReference>
<dbReference type="GO" id="GO:0043231">
    <property type="term" value="C:intracellular membrane-bounded organelle"/>
    <property type="evidence" value="ECO:0000318"/>
    <property type="project" value="GO_Central"/>
</dbReference>
<dbReference type="GO" id="GO:0016020">
    <property type="term" value="C:membrane"/>
    <property type="evidence" value="ECO:0000318"/>
    <property type="project" value="GO_Central"/>
</dbReference>
<dbReference type="GO" id="GO:0020037">
    <property type="term" value="F:heme binding"/>
    <property type="evidence" value="ECO:0000318"/>
    <property type="project" value="GO_Central"/>
</dbReference>
<dbReference type="GO" id="GO:0046872">
    <property type="term" value="F:metal ion binding"/>
    <property type="evidence" value="ECO:0007669"/>
    <property type="project" value="UniProtKB-KW"/>
</dbReference>
<dbReference type="GO" id="GO:0006979">
    <property type="term" value="P:response to oxidative stress"/>
    <property type="evidence" value="ECO:0000315"/>
    <property type="project" value="FlyBase"/>
</dbReference>
<dbReference type="GO" id="GO:0006805">
    <property type="term" value="P:xenobiotic metabolic process"/>
    <property type="evidence" value="ECO:0000315"/>
    <property type="project" value="FlyBase"/>
</dbReference>
<dbReference type="FunFam" id="3.10.120.10:FF:000002">
    <property type="entry name" value="Cytochrome b5 type B"/>
    <property type="match status" value="1"/>
</dbReference>
<dbReference type="Gene3D" id="3.10.120.10">
    <property type="entry name" value="Cytochrome b5-like heme/steroid binding domain"/>
    <property type="match status" value="1"/>
</dbReference>
<dbReference type="InterPro" id="IPR001199">
    <property type="entry name" value="Cyt_B5-like_heme/steroid-bd"/>
</dbReference>
<dbReference type="InterPro" id="IPR036400">
    <property type="entry name" value="Cyt_B5-like_heme/steroid_sf"/>
</dbReference>
<dbReference type="InterPro" id="IPR018506">
    <property type="entry name" value="Cyt_B5_heme-BS"/>
</dbReference>
<dbReference type="InterPro" id="IPR050668">
    <property type="entry name" value="Cytochrome_b5"/>
</dbReference>
<dbReference type="PANTHER" id="PTHR19359">
    <property type="entry name" value="CYTOCHROME B5"/>
    <property type="match status" value="1"/>
</dbReference>
<dbReference type="PANTHER" id="PTHR19359:SF150">
    <property type="entry name" value="CYTOCHROME B5"/>
    <property type="match status" value="1"/>
</dbReference>
<dbReference type="Pfam" id="PF00173">
    <property type="entry name" value="Cyt-b5"/>
    <property type="match status" value="1"/>
</dbReference>
<dbReference type="PRINTS" id="PR00363">
    <property type="entry name" value="CYTOCHROMEB5"/>
</dbReference>
<dbReference type="SMART" id="SM01117">
    <property type="entry name" value="Cyt-b5"/>
    <property type="match status" value="1"/>
</dbReference>
<dbReference type="SUPFAM" id="SSF55856">
    <property type="entry name" value="Cytochrome b5-like heme/steroid binding domain"/>
    <property type="match status" value="1"/>
</dbReference>
<dbReference type="PROSITE" id="PS00191">
    <property type="entry name" value="CYTOCHROME_B5_1"/>
    <property type="match status" value="1"/>
</dbReference>
<dbReference type="PROSITE" id="PS50255">
    <property type="entry name" value="CYTOCHROME_B5_2"/>
    <property type="match status" value="1"/>
</dbReference>
<accession>Q9V4N3</accession>
<accession>Q6AWQ2</accession>
<accession>Q8IH75</accession>
<accession>Q9I7E0</accession>
<evidence type="ECO:0000250" key="1"/>
<evidence type="ECO:0000255" key="2"/>
<evidence type="ECO:0000255" key="3">
    <source>
        <dbReference type="PROSITE-ProRule" id="PRU00279"/>
    </source>
</evidence>
<evidence type="ECO:0000256" key="4">
    <source>
        <dbReference type="SAM" id="MobiDB-lite"/>
    </source>
</evidence>
<evidence type="ECO:0000303" key="5">
    <source>
    </source>
</evidence>
<evidence type="ECO:0000305" key="6"/>
<sequence>MSSEETKTFTRAEVAKHNTNKDTWLLIHNNIYDVTAFLNEHPGGEEVLIEQAGKDATENFEDVGHSNDARDMMKKYKIGELVESERTSVAQKSEPTWSTEQQTEESSVKSWLVPLVLCLVATLFYKFFFGGAKQ</sequence>
<feature type="chain" id="PRO_0000166016" description="Cytochrome b5">
    <location>
        <begin position="1"/>
        <end position="134"/>
    </location>
</feature>
<feature type="transmembrane region" description="Helical" evidence="2">
    <location>
        <begin position="111"/>
        <end position="131"/>
    </location>
</feature>
<feature type="domain" description="Cytochrome b5 heme-binding" evidence="3">
    <location>
        <begin position="6"/>
        <end position="82"/>
    </location>
</feature>
<feature type="region of interest" description="Disordered" evidence="4">
    <location>
        <begin position="86"/>
        <end position="105"/>
    </location>
</feature>
<feature type="compositionally biased region" description="Polar residues" evidence="4">
    <location>
        <begin position="87"/>
        <end position="105"/>
    </location>
</feature>
<feature type="binding site" description="axial binding residue" evidence="3">
    <location>
        <position position="41"/>
    </location>
    <ligand>
        <name>heme</name>
        <dbReference type="ChEBI" id="CHEBI:30413"/>
    </ligand>
    <ligandPart>
        <name>Fe</name>
        <dbReference type="ChEBI" id="CHEBI:18248"/>
    </ligandPart>
</feature>
<feature type="binding site" description="axial binding residue" evidence="3">
    <location>
        <position position="65"/>
    </location>
    <ligand>
        <name>heme</name>
        <dbReference type="ChEBI" id="CHEBI:30413"/>
    </ligand>
    <ligandPart>
        <name>Fe</name>
        <dbReference type="ChEBI" id="CHEBI:18248"/>
    </ligandPart>
</feature>
<feature type="splice variant" id="VSP_008871" description="In isoform A." evidence="5">
    <original>MSSEETKTFTRAEVAKHNTNKDTWLLIHNNIYDVTAFLNE</original>
    <variation>MVQSKRNFARVLRIKVSVTLLAYKCQIKS</variation>
    <location>
        <begin position="1"/>
        <end position="40"/>
    </location>
</feature>